<name>AROK_CHRSD</name>
<evidence type="ECO:0000255" key="1">
    <source>
        <dbReference type="HAMAP-Rule" id="MF_00109"/>
    </source>
</evidence>
<protein>
    <recommendedName>
        <fullName evidence="1">Shikimate kinase</fullName>
        <shortName evidence="1">SK</shortName>
        <ecNumber evidence="1">2.7.1.71</ecNumber>
    </recommendedName>
</protein>
<dbReference type="EC" id="2.7.1.71" evidence="1"/>
<dbReference type="EMBL" id="CP000285">
    <property type="protein sequence ID" value="ABE57975.1"/>
    <property type="molecule type" value="Genomic_DNA"/>
</dbReference>
<dbReference type="RefSeq" id="WP_011505921.1">
    <property type="nucleotide sequence ID" value="NC_007963.1"/>
</dbReference>
<dbReference type="SMR" id="Q1QZY3"/>
<dbReference type="STRING" id="290398.Csal_0613"/>
<dbReference type="GeneID" id="95333368"/>
<dbReference type="KEGG" id="csa:Csal_0613"/>
<dbReference type="eggNOG" id="COG0703">
    <property type="taxonomic scope" value="Bacteria"/>
</dbReference>
<dbReference type="HOGENOM" id="CLU_057607_2_2_6"/>
<dbReference type="OrthoDB" id="9800332at2"/>
<dbReference type="UniPathway" id="UPA00053">
    <property type="reaction ID" value="UER00088"/>
</dbReference>
<dbReference type="Proteomes" id="UP000000239">
    <property type="component" value="Chromosome"/>
</dbReference>
<dbReference type="GO" id="GO:0005829">
    <property type="term" value="C:cytosol"/>
    <property type="evidence" value="ECO:0007669"/>
    <property type="project" value="TreeGrafter"/>
</dbReference>
<dbReference type="GO" id="GO:0005524">
    <property type="term" value="F:ATP binding"/>
    <property type="evidence" value="ECO:0007669"/>
    <property type="project" value="UniProtKB-UniRule"/>
</dbReference>
<dbReference type="GO" id="GO:0000287">
    <property type="term" value="F:magnesium ion binding"/>
    <property type="evidence" value="ECO:0007669"/>
    <property type="project" value="UniProtKB-UniRule"/>
</dbReference>
<dbReference type="GO" id="GO:0004765">
    <property type="term" value="F:shikimate kinase activity"/>
    <property type="evidence" value="ECO:0007669"/>
    <property type="project" value="UniProtKB-UniRule"/>
</dbReference>
<dbReference type="GO" id="GO:0008652">
    <property type="term" value="P:amino acid biosynthetic process"/>
    <property type="evidence" value="ECO:0007669"/>
    <property type="project" value="UniProtKB-KW"/>
</dbReference>
<dbReference type="GO" id="GO:0009073">
    <property type="term" value="P:aromatic amino acid family biosynthetic process"/>
    <property type="evidence" value="ECO:0007669"/>
    <property type="project" value="UniProtKB-KW"/>
</dbReference>
<dbReference type="GO" id="GO:0009423">
    <property type="term" value="P:chorismate biosynthetic process"/>
    <property type="evidence" value="ECO:0007669"/>
    <property type="project" value="UniProtKB-UniRule"/>
</dbReference>
<dbReference type="CDD" id="cd00464">
    <property type="entry name" value="SK"/>
    <property type="match status" value="1"/>
</dbReference>
<dbReference type="Gene3D" id="3.40.50.300">
    <property type="entry name" value="P-loop containing nucleotide triphosphate hydrolases"/>
    <property type="match status" value="1"/>
</dbReference>
<dbReference type="HAMAP" id="MF_00109">
    <property type="entry name" value="Shikimate_kinase"/>
    <property type="match status" value="1"/>
</dbReference>
<dbReference type="InterPro" id="IPR027417">
    <property type="entry name" value="P-loop_NTPase"/>
</dbReference>
<dbReference type="InterPro" id="IPR031322">
    <property type="entry name" value="Shikimate/glucono_kinase"/>
</dbReference>
<dbReference type="InterPro" id="IPR000623">
    <property type="entry name" value="Shikimate_kinase/TSH1"/>
</dbReference>
<dbReference type="InterPro" id="IPR023000">
    <property type="entry name" value="Shikimate_kinase_CS"/>
</dbReference>
<dbReference type="NCBIfam" id="NF003456">
    <property type="entry name" value="PRK05057.1"/>
    <property type="match status" value="1"/>
</dbReference>
<dbReference type="PANTHER" id="PTHR21087">
    <property type="entry name" value="SHIKIMATE KINASE"/>
    <property type="match status" value="1"/>
</dbReference>
<dbReference type="PANTHER" id="PTHR21087:SF16">
    <property type="entry name" value="SHIKIMATE KINASE 1, CHLOROPLASTIC"/>
    <property type="match status" value="1"/>
</dbReference>
<dbReference type="Pfam" id="PF01202">
    <property type="entry name" value="SKI"/>
    <property type="match status" value="1"/>
</dbReference>
<dbReference type="PRINTS" id="PR01100">
    <property type="entry name" value="SHIKIMTKNASE"/>
</dbReference>
<dbReference type="SUPFAM" id="SSF52540">
    <property type="entry name" value="P-loop containing nucleoside triphosphate hydrolases"/>
    <property type="match status" value="1"/>
</dbReference>
<dbReference type="PROSITE" id="PS01128">
    <property type="entry name" value="SHIKIMATE_KINASE"/>
    <property type="match status" value="1"/>
</dbReference>
<comment type="function">
    <text evidence="1">Catalyzes the specific phosphorylation of the 3-hydroxyl group of shikimic acid using ATP as a cosubstrate.</text>
</comment>
<comment type="catalytic activity">
    <reaction evidence="1">
        <text>shikimate + ATP = 3-phosphoshikimate + ADP + H(+)</text>
        <dbReference type="Rhea" id="RHEA:13121"/>
        <dbReference type="ChEBI" id="CHEBI:15378"/>
        <dbReference type="ChEBI" id="CHEBI:30616"/>
        <dbReference type="ChEBI" id="CHEBI:36208"/>
        <dbReference type="ChEBI" id="CHEBI:145989"/>
        <dbReference type="ChEBI" id="CHEBI:456216"/>
        <dbReference type="EC" id="2.7.1.71"/>
    </reaction>
</comment>
<comment type="cofactor">
    <cofactor evidence="1">
        <name>Mg(2+)</name>
        <dbReference type="ChEBI" id="CHEBI:18420"/>
    </cofactor>
    <text evidence="1">Binds 1 Mg(2+) ion per subunit.</text>
</comment>
<comment type="pathway">
    <text evidence="1">Metabolic intermediate biosynthesis; chorismate biosynthesis; chorismate from D-erythrose 4-phosphate and phosphoenolpyruvate: step 5/7.</text>
</comment>
<comment type="subunit">
    <text evidence="1">Monomer.</text>
</comment>
<comment type="subcellular location">
    <subcellularLocation>
        <location evidence="1">Cytoplasm</location>
    </subcellularLocation>
</comment>
<comment type="similarity">
    <text evidence="1">Belongs to the shikimate kinase family.</text>
</comment>
<organism>
    <name type="scientific">Chromohalobacter salexigens (strain ATCC BAA-138 / DSM 3043 / CIP 106854 / NCIMB 13768 / 1H11)</name>
    <dbReference type="NCBI Taxonomy" id="290398"/>
    <lineage>
        <taxon>Bacteria</taxon>
        <taxon>Pseudomonadati</taxon>
        <taxon>Pseudomonadota</taxon>
        <taxon>Gammaproteobacteria</taxon>
        <taxon>Oceanospirillales</taxon>
        <taxon>Halomonadaceae</taxon>
        <taxon>Chromohalobacter</taxon>
    </lineage>
</organism>
<gene>
    <name evidence="1" type="primary">aroK</name>
    <name type="ordered locus">Csal_0613</name>
</gene>
<sequence>MQGLPTIILVGPMGAGKSTIGRLLAAELQREFFDSDHEIEARCGANIAWIFDVEGEAGFRDRETAMLRELASLDAVVLATGGGAVMREDNRQALRERGTVVYLATSVEQQIRRTARDRNRPLLRQGNPEQVLRDLFAKRDPLYRATADLVVRTDRRGPRAVVNEIIRRTKRLSDPLDLKA</sequence>
<reference key="1">
    <citation type="journal article" date="2011" name="Stand. Genomic Sci.">
        <title>Complete genome sequence of the halophilic and highly halotolerant Chromohalobacter salexigens type strain (1H11(T)).</title>
        <authorList>
            <person name="Copeland A."/>
            <person name="O'Connor K."/>
            <person name="Lucas S."/>
            <person name="Lapidus A."/>
            <person name="Berry K.W."/>
            <person name="Detter J.C."/>
            <person name="Del Rio T.G."/>
            <person name="Hammon N."/>
            <person name="Dalin E."/>
            <person name="Tice H."/>
            <person name="Pitluck S."/>
            <person name="Bruce D."/>
            <person name="Goodwin L."/>
            <person name="Han C."/>
            <person name="Tapia R."/>
            <person name="Saunders E."/>
            <person name="Schmutz J."/>
            <person name="Brettin T."/>
            <person name="Larimer F."/>
            <person name="Land M."/>
            <person name="Hauser L."/>
            <person name="Vargas C."/>
            <person name="Nieto J.J."/>
            <person name="Kyrpides N.C."/>
            <person name="Ivanova N."/>
            <person name="Goker M."/>
            <person name="Klenk H.P."/>
            <person name="Csonka L.N."/>
            <person name="Woyke T."/>
        </authorList>
    </citation>
    <scope>NUCLEOTIDE SEQUENCE [LARGE SCALE GENOMIC DNA]</scope>
    <source>
        <strain>ATCC BAA-138 / DSM 3043 / CIP 106854 / NCIMB 13768 / 1H11</strain>
    </source>
</reference>
<keyword id="KW-0028">Amino-acid biosynthesis</keyword>
<keyword id="KW-0057">Aromatic amino acid biosynthesis</keyword>
<keyword id="KW-0067">ATP-binding</keyword>
<keyword id="KW-0963">Cytoplasm</keyword>
<keyword id="KW-0418">Kinase</keyword>
<keyword id="KW-0460">Magnesium</keyword>
<keyword id="KW-0479">Metal-binding</keyword>
<keyword id="KW-0547">Nucleotide-binding</keyword>
<keyword id="KW-1185">Reference proteome</keyword>
<keyword id="KW-0808">Transferase</keyword>
<accession>Q1QZY3</accession>
<proteinExistence type="inferred from homology"/>
<feature type="chain" id="PRO_1000119052" description="Shikimate kinase">
    <location>
        <begin position="1"/>
        <end position="180"/>
    </location>
</feature>
<feature type="binding site" evidence="1">
    <location>
        <begin position="14"/>
        <end position="19"/>
    </location>
    <ligand>
        <name>ATP</name>
        <dbReference type="ChEBI" id="CHEBI:30616"/>
    </ligand>
</feature>
<feature type="binding site" evidence="1">
    <location>
        <position position="18"/>
    </location>
    <ligand>
        <name>Mg(2+)</name>
        <dbReference type="ChEBI" id="CHEBI:18420"/>
    </ligand>
</feature>
<feature type="binding site" evidence="1">
    <location>
        <position position="36"/>
    </location>
    <ligand>
        <name>substrate</name>
    </ligand>
</feature>
<feature type="binding site" evidence="1">
    <location>
        <position position="60"/>
    </location>
    <ligand>
        <name>substrate</name>
    </ligand>
</feature>
<feature type="binding site" evidence="1">
    <location>
        <position position="82"/>
    </location>
    <ligand>
        <name>substrate</name>
    </ligand>
</feature>
<feature type="binding site" evidence="1">
    <location>
        <position position="120"/>
    </location>
    <ligand>
        <name>ATP</name>
        <dbReference type="ChEBI" id="CHEBI:30616"/>
    </ligand>
</feature>
<feature type="binding site" evidence="1">
    <location>
        <position position="139"/>
    </location>
    <ligand>
        <name>substrate</name>
    </ligand>
</feature>